<gene>
    <name evidence="1" type="primary">hisC2</name>
    <name type="ordered locus">PFL_4311</name>
</gene>
<dbReference type="EC" id="2.6.1.9" evidence="1"/>
<dbReference type="EMBL" id="CP000076">
    <property type="protein sequence ID" value="AAY93566.1"/>
    <property type="molecule type" value="Genomic_DNA"/>
</dbReference>
<dbReference type="RefSeq" id="WP_011062582.1">
    <property type="nucleotide sequence ID" value="NC_004129.6"/>
</dbReference>
<dbReference type="SMR" id="Q4K8N0"/>
<dbReference type="STRING" id="220664.PFL_4311"/>
<dbReference type="KEGG" id="pfl:PFL_4311"/>
<dbReference type="PATRIC" id="fig|220664.5.peg.4416"/>
<dbReference type="eggNOG" id="COG0079">
    <property type="taxonomic scope" value="Bacteria"/>
</dbReference>
<dbReference type="HOGENOM" id="CLU_017584_3_3_6"/>
<dbReference type="UniPathway" id="UPA00031">
    <property type="reaction ID" value="UER00012"/>
</dbReference>
<dbReference type="Proteomes" id="UP000008540">
    <property type="component" value="Chromosome"/>
</dbReference>
<dbReference type="GO" id="GO:0004400">
    <property type="term" value="F:histidinol-phosphate transaminase activity"/>
    <property type="evidence" value="ECO:0007669"/>
    <property type="project" value="UniProtKB-UniRule"/>
</dbReference>
<dbReference type="GO" id="GO:0030170">
    <property type="term" value="F:pyridoxal phosphate binding"/>
    <property type="evidence" value="ECO:0007669"/>
    <property type="project" value="InterPro"/>
</dbReference>
<dbReference type="GO" id="GO:0000105">
    <property type="term" value="P:L-histidine biosynthetic process"/>
    <property type="evidence" value="ECO:0007669"/>
    <property type="project" value="UniProtKB-UniRule"/>
</dbReference>
<dbReference type="CDD" id="cd00609">
    <property type="entry name" value="AAT_like"/>
    <property type="match status" value="1"/>
</dbReference>
<dbReference type="Gene3D" id="3.90.1150.10">
    <property type="entry name" value="Aspartate Aminotransferase, domain 1"/>
    <property type="match status" value="1"/>
</dbReference>
<dbReference type="Gene3D" id="3.40.640.10">
    <property type="entry name" value="Type I PLP-dependent aspartate aminotransferase-like (Major domain)"/>
    <property type="match status" value="1"/>
</dbReference>
<dbReference type="HAMAP" id="MF_01023">
    <property type="entry name" value="HisC_aminotrans_2"/>
    <property type="match status" value="1"/>
</dbReference>
<dbReference type="InterPro" id="IPR001917">
    <property type="entry name" value="Aminotrans_II_pyridoxalP_BS"/>
</dbReference>
<dbReference type="InterPro" id="IPR004839">
    <property type="entry name" value="Aminotransferase_I/II_large"/>
</dbReference>
<dbReference type="InterPro" id="IPR005861">
    <property type="entry name" value="HisP_aminotrans"/>
</dbReference>
<dbReference type="InterPro" id="IPR050106">
    <property type="entry name" value="HistidinolP_aminotransfase"/>
</dbReference>
<dbReference type="InterPro" id="IPR015424">
    <property type="entry name" value="PyrdxlP-dep_Trfase"/>
</dbReference>
<dbReference type="InterPro" id="IPR015421">
    <property type="entry name" value="PyrdxlP-dep_Trfase_major"/>
</dbReference>
<dbReference type="InterPro" id="IPR015422">
    <property type="entry name" value="PyrdxlP-dep_Trfase_small"/>
</dbReference>
<dbReference type="NCBIfam" id="TIGR01141">
    <property type="entry name" value="hisC"/>
    <property type="match status" value="1"/>
</dbReference>
<dbReference type="PANTHER" id="PTHR43643:SF3">
    <property type="entry name" value="HISTIDINOL-PHOSPHATE AMINOTRANSFERASE"/>
    <property type="match status" value="1"/>
</dbReference>
<dbReference type="PANTHER" id="PTHR43643">
    <property type="entry name" value="HISTIDINOL-PHOSPHATE AMINOTRANSFERASE 2"/>
    <property type="match status" value="1"/>
</dbReference>
<dbReference type="Pfam" id="PF00155">
    <property type="entry name" value="Aminotran_1_2"/>
    <property type="match status" value="1"/>
</dbReference>
<dbReference type="SUPFAM" id="SSF53383">
    <property type="entry name" value="PLP-dependent transferases"/>
    <property type="match status" value="1"/>
</dbReference>
<dbReference type="PROSITE" id="PS00599">
    <property type="entry name" value="AA_TRANSFER_CLASS_2"/>
    <property type="match status" value="1"/>
</dbReference>
<organism>
    <name type="scientific">Pseudomonas fluorescens (strain ATCC BAA-477 / NRRL B-23932 / Pf-5)</name>
    <dbReference type="NCBI Taxonomy" id="220664"/>
    <lineage>
        <taxon>Bacteria</taxon>
        <taxon>Pseudomonadati</taxon>
        <taxon>Pseudomonadota</taxon>
        <taxon>Gammaproteobacteria</taxon>
        <taxon>Pseudomonadales</taxon>
        <taxon>Pseudomonadaceae</taxon>
        <taxon>Pseudomonas</taxon>
    </lineage>
</organism>
<feature type="chain" id="PRO_0000153420" description="Histidinol-phosphate aminotransferase 2">
    <location>
        <begin position="1"/>
        <end position="370"/>
    </location>
</feature>
<feature type="modified residue" description="N6-(pyridoxal phosphate)lysine" evidence="1">
    <location>
        <position position="230"/>
    </location>
</feature>
<keyword id="KW-0028">Amino-acid biosynthesis</keyword>
<keyword id="KW-0032">Aminotransferase</keyword>
<keyword id="KW-0368">Histidine biosynthesis</keyword>
<keyword id="KW-0663">Pyridoxal phosphate</keyword>
<keyword id="KW-0808">Transferase</keyword>
<sequence>MSGDFLALAQPGVQQLSPYVPGKPVDELARELDIDPATIVKLASNENPLGASPKALAAIRDELAELTRYPDGNGFALKSLLAERCGVEIDQVTLGNGSNDILELVARAYLAPGLNAVFSEHAFAVYPIVTQAVGAQARVVPAKNWGHDLPAMLKAIDDRTRVVFIANPNNPTGTWFGAEELDEFLQDVPAHVLVVLDEAYIEYAEGSDLPDGLDFLAAYPNLLVSRTFSKAYGLAALRVGYGLSTPVVADVLNRVRQPFNVNSLALAAACAALEDVDYLAESRRLNEAGMQQLEAGFRDLGLRWIPSKGNFIAVDLGREAAPIFQELLREGVIVRPVANYGMPNHLRITIGLPAENTRFLEALAKVLARA</sequence>
<accession>Q4K8N0</accession>
<evidence type="ECO:0000255" key="1">
    <source>
        <dbReference type="HAMAP-Rule" id="MF_01023"/>
    </source>
</evidence>
<reference key="1">
    <citation type="journal article" date="2005" name="Nat. Biotechnol.">
        <title>Complete genome sequence of the plant commensal Pseudomonas fluorescens Pf-5.</title>
        <authorList>
            <person name="Paulsen I.T."/>
            <person name="Press C.M."/>
            <person name="Ravel J."/>
            <person name="Kobayashi D.Y."/>
            <person name="Myers G.S.A."/>
            <person name="Mavrodi D.V."/>
            <person name="DeBoy R.T."/>
            <person name="Seshadri R."/>
            <person name="Ren Q."/>
            <person name="Madupu R."/>
            <person name="Dodson R.J."/>
            <person name="Durkin A.S."/>
            <person name="Brinkac L.M."/>
            <person name="Daugherty S.C."/>
            <person name="Sullivan S.A."/>
            <person name="Rosovitz M.J."/>
            <person name="Gwinn M.L."/>
            <person name="Zhou L."/>
            <person name="Schneider D.J."/>
            <person name="Cartinhour S.W."/>
            <person name="Nelson W.C."/>
            <person name="Weidman J."/>
            <person name="Watkins K."/>
            <person name="Tran K."/>
            <person name="Khouri H."/>
            <person name="Pierson E.A."/>
            <person name="Pierson L.S. III"/>
            <person name="Thomashow L.S."/>
            <person name="Loper J.E."/>
        </authorList>
    </citation>
    <scope>NUCLEOTIDE SEQUENCE [LARGE SCALE GENOMIC DNA]</scope>
    <source>
        <strain>ATCC BAA-477 / NRRL B-23932 / Pf-5</strain>
    </source>
</reference>
<comment type="catalytic activity">
    <reaction evidence="1">
        <text>L-histidinol phosphate + 2-oxoglutarate = 3-(imidazol-4-yl)-2-oxopropyl phosphate + L-glutamate</text>
        <dbReference type="Rhea" id="RHEA:23744"/>
        <dbReference type="ChEBI" id="CHEBI:16810"/>
        <dbReference type="ChEBI" id="CHEBI:29985"/>
        <dbReference type="ChEBI" id="CHEBI:57766"/>
        <dbReference type="ChEBI" id="CHEBI:57980"/>
        <dbReference type="EC" id="2.6.1.9"/>
    </reaction>
</comment>
<comment type="cofactor">
    <cofactor evidence="1">
        <name>pyridoxal 5'-phosphate</name>
        <dbReference type="ChEBI" id="CHEBI:597326"/>
    </cofactor>
</comment>
<comment type="pathway">
    <text evidence="1">Amino-acid biosynthesis; L-histidine biosynthesis; L-histidine from 5-phospho-alpha-D-ribose 1-diphosphate: step 7/9.</text>
</comment>
<comment type="subunit">
    <text evidence="1">Homodimer.</text>
</comment>
<comment type="similarity">
    <text evidence="1">Belongs to the class-II pyridoxal-phosphate-dependent aminotransferase family. Histidinol-phosphate aminotransferase subfamily.</text>
</comment>
<name>HIS82_PSEF5</name>
<proteinExistence type="inferred from homology"/>
<protein>
    <recommendedName>
        <fullName evidence="1">Histidinol-phosphate aminotransferase 2</fullName>
        <ecNumber evidence="1">2.6.1.9</ecNumber>
    </recommendedName>
    <alternativeName>
        <fullName evidence="1">Imidazole acetol-phosphate transaminase 2</fullName>
    </alternativeName>
</protein>